<keyword id="KW-0256">Endoplasmic reticulum</keyword>
<keyword id="KW-0325">Glycoprotein</keyword>
<keyword id="KW-0328">Glycosyltransferase</keyword>
<keyword id="KW-0443">Lipid metabolism</keyword>
<keyword id="KW-0472">Membrane</keyword>
<keyword id="KW-1267">Proteomics identification</keyword>
<keyword id="KW-1185">Reference proteome</keyword>
<keyword id="KW-0732">Signal</keyword>
<keyword id="KW-0746">Sphingolipid metabolism</keyword>
<keyword id="KW-0808">Transferase</keyword>
<keyword id="KW-0812">Transmembrane</keyword>
<keyword id="KW-1133">Transmembrane helix</keyword>
<gene>
    <name evidence="9" type="primary">UGT8</name>
    <name type="synonym">CGT</name>
    <name type="synonym">UGT4</name>
</gene>
<name>CGT_HUMAN</name>
<feature type="signal peptide" evidence="2">
    <location>
        <begin position="1"/>
        <end position="20"/>
    </location>
</feature>
<feature type="chain" id="PRO_0000036064" description="2-hydroxyacylsphingosine 1-beta-galactosyltransferase">
    <location>
        <begin position="21"/>
        <end position="541"/>
    </location>
</feature>
<feature type="transmembrane region" description="Helical" evidence="2">
    <location>
        <begin position="472"/>
        <end position="492"/>
    </location>
</feature>
<feature type="glycosylation site" description="N-linked (GlcNAc...) asparagine" evidence="2">
    <location>
        <position position="78"/>
    </location>
</feature>
<feature type="glycosylation site" description="N-linked (GlcNAc...) asparagine" evidence="2">
    <location>
        <position position="333"/>
    </location>
</feature>
<feature type="glycosylation site" description="N-linked (GlcNAc...) asparagine" evidence="2">
    <location>
        <position position="442"/>
    </location>
</feature>
<feature type="sequence variant" id="VAR_052466" description="In dbSNP:rs4148254.">
    <original>P</original>
    <variation>L</variation>
    <location>
        <position position="226"/>
    </location>
</feature>
<feature type="sequence variant" id="VAR_052467" description="In dbSNP:rs11098261." evidence="3 4 5 6 7">
    <original>I</original>
    <variation>M</variation>
    <location>
        <position position="368"/>
    </location>
</feature>
<feature type="sequence conflict" description="In Ref. 2; AAC51187." evidence="8" ref="2">
    <original>T</original>
    <variation>P</variation>
    <location>
        <position position="99"/>
    </location>
</feature>
<feature type="sequence conflict" description="In Ref. 2; AAC51187." evidence="8" ref="2">
    <original>L</original>
    <variation>M</variation>
    <location>
        <position position="116"/>
    </location>
</feature>
<feature type="sequence conflict" description="In Ref. 2; AAC51187." evidence="8" ref="2">
    <original>L</original>
    <variation>V</variation>
    <location>
        <position position="356"/>
    </location>
</feature>
<feature type="sequence conflict" description="In Ref. 2; AAC51187." evidence="8" ref="2">
    <original>L</original>
    <variation>V</variation>
    <location>
        <position position="379"/>
    </location>
</feature>
<sequence>MKSYTPYFILLWSAVGIAKAAKIIIVPPIMFESHMYIFKTLASALHERGHHTVFLLSEGRDIAPSNHYSLQRYPGIFNSTTSDAFLQSKMRNIFSGRLTAIELFDILDHYTKNCDLMVGNHALIQGLKKEKFDLLLVDPNDMCGFVIAHLLGVKYAVFSTGLWYPAEVGAPAPLAYVPEFNSLLTDRMNLLQRMKNTGVYLISRLGVSFLVLPKYERIMQKYNLLPEKSMYDLVHGSSLWMLCTDVALEFPRPTLPNVVYVGGILTKPASPLPEDLQRWVNGANEHGFVLVSFGAGVKYLSEDIANKLAGALGRLPQKVIWRFSGPKPKNLGNNTKLIEWLPQNDLLGHSKIKAFLSHGGLNSIFETIYHGVPVVGIPLFGDHYDTMTRVQAKGMGILLEWKTVTEKELYEALVKVINNPSYRQRAQKLSEIHKDQPGHPVNRTIYWIDYIIRHNGAHHLRAAVHQISFCQYFLLDIAFVLLLGAALLYFLLSWVTKFIYRKIKSLWSRNKHSTVNGHYHNGILNGKYKRNGHIKHEKKVK</sequence>
<proteinExistence type="evidence at protein level"/>
<accession>Q16880</accession>
<accession>B3KXU7</accession>
<accession>O00196</accession>
<protein>
    <recommendedName>
        <fullName evidence="8">2-hydroxyacylsphingosine 1-beta-galactosyltransferase</fullName>
        <ecNumber evidence="1">2.4.1.47</ecNumber>
    </recommendedName>
    <alternativeName>
        <fullName>Ceramide UDP-galactosyltransferase</fullName>
    </alternativeName>
    <alternativeName>
        <fullName>Cerebroside synthase</fullName>
    </alternativeName>
    <alternativeName>
        <fullName>UDP-galactose-ceramide galactosyltransferase</fullName>
    </alternativeName>
</protein>
<organism>
    <name type="scientific">Homo sapiens</name>
    <name type="common">Human</name>
    <dbReference type="NCBI Taxonomy" id="9606"/>
    <lineage>
        <taxon>Eukaryota</taxon>
        <taxon>Metazoa</taxon>
        <taxon>Chordata</taxon>
        <taxon>Craniata</taxon>
        <taxon>Vertebrata</taxon>
        <taxon>Euteleostomi</taxon>
        <taxon>Mammalia</taxon>
        <taxon>Eutheria</taxon>
        <taxon>Euarchontoglires</taxon>
        <taxon>Primates</taxon>
        <taxon>Haplorrhini</taxon>
        <taxon>Catarrhini</taxon>
        <taxon>Hominidae</taxon>
        <taxon>Homo</taxon>
    </lineage>
</organism>
<reference key="1">
    <citation type="journal article" date="1996" name="Genomics">
        <title>The human gene CGT encoding the UDP-galactose ceramide galactosyl transferase (cerebroside synthase): cloning, characterization, and assignment to human chromosome 4, band q26.</title>
        <authorList>
            <person name="Bosio A."/>
            <person name="Binczek E."/>
            <person name="Lebeau M.M."/>
            <person name="Fernald A.A."/>
            <person name="Stoffel W."/>
        </authorList>
    </citation>
    <scope>NUCLEOTIDE SEQUENCE [GENOMIC DNA / MRNA]</scope>
    <scope>VARIANT MET-368</scope>
</reference>
<reference key="2">
    <citation type="journal article" date="1997" name="Biochem. Biophys. Res. Commun.">
        <title>Cloning, characterization, and expression of human ceramide galactosyltransferase cDNA.</title>
        <authorList>
            <person name="Kapitonov D.E."/>
            <person name="Yu R.K."/>
        </authorList>
    </citation>
    <scope>NUCLEOTIDE SEQUENCE [MRNA]</scope>
    <scope>VARIANT MET-368</scope>
    <scope>CATALYTIC ACTIVITY</scope>
    <scope>FUNCTION</scope>
</reference>
<reference key="3">
    <citation type="journal article" date="2004" name="Nat. Genet.">
        <title>Complete sequencing and characterization of 21,243 full-length human cDNAs.</title>
        <authorList>
            <person name="Ota T."/>
            <person name="Suzuki Y."/>
            <person name="Nishikawa T."/>
            <person name="Otsuki T."/>
            <person name="Sugiyama T."/>
            <person name="Irie R."/>
            <person name="Wakamatsu A."/>
            <person name="Hayashi K."/>
            <person name="Sato H."/>
            <person name="Nagai K."/>
            <person name="Kimura K."/>
            <person name="Makita H."/>
            <person name="Sekine M."/>
            <person name="Obayashi M."/>
            <person name="Nishi T."/>
            <person name="Shibahara T."/>
            <person name="Tanaka T."/>
            <person name="Ishii S."/>
            <person name="Yamamoto J."/>
            <person name="Saito K."/>
            <person name="Kawai Y."/>
            <person name="Isono Y."/>
            <person name="Nakamura Y."/>
            <person name="Nagahari K."/>
            <person name="Murakami K."/>
            <person name="Yasuda T."/>
            <person name="Iwayanagi T."/>
            <person name="Wagatsuma M."/>
            <person name="Shiratori A."/>
            <person name="Sudo H."/>
            <person name="Hosoiri T."/>
            <person name="Kaku Y."/>
            <person name="Kodaira H."/>
            <person name="Kondo H."/>
            <person name="Sugawara M."/>
            <person name="Takahashi M."/>
            <person name="Kanda K."/>
            <person name="Yokoi T."/>
            <person name="Furuya T."/>
            <person name="Kikkawa E."/>
            <person name="Omura Y."/>
            <person name="Abe K."/>
            <person name="Kamihara K."/>
            <person name="Katsuta N."/>
            <person name="Sato K."/>
            <person name="Tanikawa M."/>
            <person name="Yamazaki M."/>
            <person name="Ninomiya K."/>
            <person name="Ishibashi T."/>
            <person name="Yamashita H."/>
            <person name="Murakawa K."/>
            <person name="Fujimori K."/>
            <person name="Tanai H."/>
            <person name="Kimata M."/>
            <person name="Watanabe M."/>
            <person name="Hiraoka S."/>
            <person name="Chiba Y."/>
            <person name="Ishida S."/>
            <person name="Ono Y."/>
            <person name="Takiguchi S."/>
            <person name="Watanabe S."/>
            <person name="Yosida M."/>
            <person name="Hotuta T."/>
            <person name="Kusano J."/>
            <person name="Kanehori K."/>
            <person name="Takahashi-Fujii A."/>
            <person name="Hara H."/>
            <person name="Tanase T.-O."/>
            <person name="Nomura Y."/>
            <person name="Togiya S."/>
            <person name="Komai F."/>
            <person name="Hara R."/>
            <person name="Takeuchi K."/>
            <person name="Arita M."/>
            <person name="Imose N."/>
            <person name="Musashino K."/>
            <person name="Yuuki H."/>
            <person name="Oshima A."/>
            <person name="Sasaki N."/>
            <person name="Aotsuka S."/>
            <person name="Yoshikawa Y."/>
            <person name="Matsunawa H."/>
            <person name="Ichihara T."/>
            <person name="Shiohata N."/>
            <person name="Sano S."/>
            <person name="Moriya S."/>
            <person name="Momiyama H."/>
            <person name="Satoh N."/>
            <person name="Takami S."/>
            <person name="Terashima Y."/>
            <person name="Suzuki O."/>
            <person name="Nakagawa S."/>
            <person name="Senoh A."/>
            <person name="Mizoguchi H."/>
            <person name="Goto Y."/>
            <person name="Shimizu F."/>
            <person name="Wakebe H."/>
            <person name="Hishigaki H."/>
            <person name="Watanabe T."/>
            <person name="Sugiyama A."/>
            <person name="Takemoto M."/>
            <person name="Kawakami B."/>
            <person name="Yamazaki M."/>
            <person name="Watanabe K."/>
            <person name="Kumagai A."/>
            <person name="Itakura S."/>
            <person name="Fukuzumi Y."/>
            <person name="Fujimori Y."/>
            <person name="Komiyama M."/>
            <person name="Tashiro H."/>
            <person name="Tanigami A."/>
            <person name="Fujiwara T."/>
            <person name="Ono T."/>
            <person name="Yamada K."/>
            <person name="Fujii Y."/>
            <person name="Ozaki K."/>
            <person name="Hirao M."/>
            <person name="Ohmori Y."/>
            <person name="Kawabata A."/>
            <person name="Hikiji T."/>
            <person name="Kobatake N."/>
            <person name="Inagaki H."/>
            <person name="Ikema Y."/>
            <person name="Okamoto S."/>
            <person name="Okitani R."/>
            <person name="Kawakami T."/>
            <person name="Noguchi S."/>
            <person name="Itoh T."/>
            <person name="Shigeta K."/>
            <person name="Senba T."/>
            <person name="Matsumura K."/>
            <person name="Nakajima Y."/>
            <person name="Mizuno T."/>
            <person name="Morinaga M."/>
            <person name="Sasaki M."/>
            <person name="Togashi T."/>
            <person name="Oyama M."/>
            <person name="Hata H."/>
            <person name="Watanabe M."/>
            <person name="Komatsu T."/>
            <person name="Mizushima-Sugano J."/>
            <person name="Satoh T."/>
            <person name="Shirai Y."/>
            <person name="Takahashi Y."/>
            <person name="Nakagawa K."/>
            <person name="Okumura K."/>
            <person name="Nagase T."/>
            <person name="Nomura N."/>
            <person name="Kikuchi H."/>
            <person name="Masuho Y."/>
            <person name="Yamashita R."/>
            <person name="Nakai K."/>
            <person name="Yada T."/>
            <person name="Nakamura Y."/>
            <person name="Ohara O."/>
            <person name="Isogai T."/>
            <person name="Sugano S."/>
        </authorList>
    </citation>
    <scope>NUCLEOTIDE SEQUENCE [LARGE SCALE MRNA]</scope>
    <scope>VARIANT MET-368</scope>
    <source>
        <tissue>Testis</tissue>
    </source>
</reference>
<reference key="4">
    <citation type="journal article" date="2005" name="Nature">
        <title>Generation and annotation of the DNA sequences of human chromosomes 2 and 4.</title>
        <authorList>
            <person name="Hillier L.W."/>
            <person name="Graves T.A."/>
            <person name="Fulton R.S."/>
            <person name="Fulton L.A."/>
            <person name="Pepin K.H."/>
            <person name="Minx P."/>
            <person name="Wagner-McPherson C."/>
            <person name="Layman D."/>
            <person name="Wylie K."/>
            <person name="Sekhon M."/>
            <person name="Becker M.C."/>
            <person name="Fewell G.A."/>
            <person name="Delehaunty K.D."/>
            <person name="Miner T.L."/>
            <person name="Nash W.E."/>
            <person name="Kremitzki C."/>
            <person name="Oddy L."/>
            <person name="Du H."/>
            <person name="Sun H."/>
            <person name="Bradshaw-Cordum H."/>
            <person name="Ali J."/>
            <person name="Carter J."/>
            <person name="Cordes M."/>
            <person name="Harris A."/>
            <person name="Isak A."/>
            <person name="van Brunt A."/>
            <person name="Nguyen C."/>
            <person name="Du F."/>
            <person name="Courtney L."/>
            <person name="Kalicki J."/>
            <person name="Ozersky P."/>
            <person name="Abbott S."/>
            <person name="Armstrong J."/>
            <person name="Belter E.A."/>
            <person name="Caruso L."/>
            <person name="Cedroni M."/>
            <person name="Cotton M."/>
            <person name="Davidson T."/>
            <person name="Desai A."/>
            <person name="Elliott G."/>
            <person name="Erb T."/>
            <person name="Fronick C."/>
            <person name="Gaige T."/>
            <person name="Haakenson W."/>
            <person name="Haglund K."/>
            <person name="Holmes A."/>
            <person name="Harkins R."/>
            <person name="Kim K."/>
            <person name="Kruchowski S.S."/>
            <person name="Strong C.M."/>
            <person name="Grewal N."/>
            <person name="Goyea E."/>
            <person name="Hou S."/>
            <person name="Levy A."/>
            <person name="Martinka S."/>
            <person name="Mead K."/>
            <person name="McLellan M.D."/>
            <person name="Meyer R."/>
            <person name="Randall-Maher J."/>
            <person name="Tomlinson C."/>
            <person name="Dauphin-Kohlberg S."/>
            <person name="Kozlowicz-Reilly A."/>
            <person name="Shah N."/>
            <person name="Swearengen-Shahid S."/>
            <person name="Snider J."/>
            <person name="Strong J.T."/>
            <person name="Thompson J."/>
            <person name="Yoakum M."/>
            <person name="Leonard S."/>
            <person name="Pearman C."/>
            <person name="Trani L."/>
            <person name="Radionenko M."/>
            <person name="Waligorski J.E."/>
            <person name="Wang C."/>
            <person name="Rock S.M."/>
            <person name="Tin-Wollam A.-M."/>
            <person name="Maupin R."/>
            <person name="Latreille P."/>
            <person name="Wendl M.C."/>
            <person name="Yang S.-P."/>
            <person name="Pohl C."/>
            <person name="Wallis J.W."/>
            <person name="Spieth J."/>
            <person name="Bieri T.A."/>
            <person name="Berkowicz N."/>
            <person name="Nelson J.O."/>
            <person name="Osborne J."/>
            <person name="Ding L."/>
            <person name="Meyer R."/>
            <person name="Sabo A."/>
            <person name="Shotland Y."/>
            <person name="Sinha P."/>
            <person name="Wohldmann P.E."/>
            <person name="Cook L.L."/>
            <person name="Hickenbotham M.T."/>
            <person name="Eldred J."/>
            <person name="Williams D."/>
            <person name="Jones T.A."/>
            <person name="She X."/>
            <person name="Ciccarelli F.D."/>
            <person name="Izaurralde E."/>
            <person name="Taylor J."/>
            <person name="Schmutz J."/>
            <person name="Myers R.M."/>
            <person name="Cox D.R."/>
            <person name="Huang X."/>
            <person name="McPherson J.D."/>
            <person name="Mardis E.R."/>
            <person name="Clifton S.W."/>
            <person name="Warren W.C."/>
            <person name="Chinwalla A.T."/>
            <person name="Eddy S.R."/>
            <person name="Marra M.A."/>
            <person name="Ovcharenko I."/>
            <person name="Furey T.S."/>
            <person name="Miller W."/>
            <person name="Eichler E.E."/>
            <person name="Bork P."/>
            <person name="Suyama M."/>
            <person name="Torrents D."/>
            <person name="Waterston R.H."/>
            <person name="Wilson R.K."/>
        </authorList>
    </citation>
    <scope>NUCLEOTIDE SEQUENCE [LARGE SCALE GENOMIC DNA]</scope>
</reference>
<reference key="5">
    <citation type="submission" date="2005-07" db="EMBL/GenBank/DDBJ databases">
        <authorList>
            <person name="Mural R.J."/>
            <person name="Istrail S."/>
            <person name="Sutton G.G."/>
            <person name="Florea L."/>
            <person name="Halpern A.L."/>
            <person name="Mobarry C.M."/>
            <person name="Lippert R."/>
            <person name="Walenz B."/>
            <person name="Shatkay H."/>
            <person name="Dew I."/>
            <person name="Miller J.R."/>
            <person name="Flanigan M.J."/>
            <person name="Edwards N.J."/>
            <person name="Bolanos R."/>
            <person name="Fasulo D."/>
            <person name="Halldorsson B.V."/>
            <person name="Hannenhalli S."/>
            <person name="Turner R."/>
            <person name="Yooseph S."/>
            <person name="Lu F."/>
            <person name="Nusskern D.R."/>
            <person name="Shue B.C."/>
            <person name="Zheng X.H."/>
            <person name="Zhong F."/>
            <person name="Delcher A.L."/>
            <person name="Huson D.H."/>
            <person name="Kravitz S.A."/>
            <person name="Mouchard L."/>
            <person name="Reinert K."/>
            <person name="Remington K.A."/>
            <person name="Clark A.G."/>
            <person name="Waterman M.S."/>
            <person name="Eichler E.E."/>
            <person name="Adams M.D."/>
            <person name="Hunkapiller M.W."/>
            <person name="Myers E.W."/>
            <person name="Venter J.C."/>
        </authorList>
    </citation>
    <scope>NUCLEOTIDE SEQUENCE [LARGE SCALE GENOMIC DNA]</scope>
    <scope>VARIANT MET-368</scope>
</reference>
<reference key="6">
    <citation type="journal article" date="2004" name="Genome Res.">
        <title>The status, quality, and expansion of the NIH full-length cDNA project: the Mammalian Gene Collection (MGC).</title>
        <authorList>
            <consortium name="The MGC Project Team"/>
        </authorList>
    </citation>
    <scope>NUCLEOTIDE SEQUENCE [LARGE SCALE MRNA]</scope>
    <scope>VARIANT MET-368</scope>
    <source>
        <tissue>Brain</tissue>
    </source>
</reference>
<dbReference type="EC" id="2.4.1.47" evidence="1"/>
<dbReference type="EMBL" id="U30930">
    <property type="protein sequence ID" value="AAC50565.1"/>
    <property type="molecule type" value="mRNA"/>
</dbReference>
<dbReference type="EMBL" id="U32370">
    <property type="protein sequence ID" value="AAC50815.1"/>
    <property type="molecule type" value="Genomic_DNA"/>
</dbReference>
<dbReference type="EMBL" id="U31353">
    <property type="protein sequence ID" value="AAC50815.1"/>
    <property type="status" value="JOINED"/>
    <property type="molecule type" value="Genomic_DNA"/>
</dbReference>
<dbReference type="EMBL" id="U31461">
    <property type="protein sequence ID" value="AAC50815.1"/>
    <property type="status" value="JOINED"/>
    <property type="molecule type" value="Genomic_DNA"/>
</dbReference>
<dbReference type="EMBL" id="U31658">
    <property type="protein sequence ID" value="AAC50815.1"/>
    <property type="status" value="JOINED"/>
    <property type="molecule type" value="Genomic_DNA"/>
</dbReference>
<dbReference type="EMBL" id="U31861">
    <property type="protein sequence ID" value="AAC50815.1"/>
    <property type="status" value="JOINED"/>
    <property type="molecule type" value="Genomic_DNA"/>
</dbReference>
<dbReference type="EMBL" id="U62899">
    <property type="protein sequence ID" value="AAC51187.1"/>
    <property type="molecule type" value="mRNA"/>
</dbReference>
<dbReference type="EMBL" id="AK127970">
    <property type="protein sequence ID" value="BAG54609.1"/>
    <property type="molecule type" value="mRNA"/>
</dbReference>
<dbReference type="EMBL" id="AC122938">
    <property type="status" value="NOT_ANNOTATED_CDS"/>
    <property type="molecule type" value="Genomic_DNA"/>
</dbReference>
<dbReference type="EMBL" id="CH471057">
    <property type="protein sequence ID" value="EAX06307.1"/>
    <property type="molecule type" value="Genomic_DNA"/>
</dbReference>
<dbReference type="EMBL" id="BC075069">
    <property type="protein sequence ID" value="AAH75069.1"/>
    <property type="molecule type" value="mRNA"/>
</dbReference>
<dbReference type="CCDS" id="CCDS3705.1"/>
<dbReference type="PIR" id="JC5423">
    <property type="entry name" value="JC5423"/>
</dbReference>
<dbReference type="RefSeq" id="NP_001121646.2">
    <property type="nucleotide sequence ID" value="NM_001128174.3"/>
</dbReference>
<dbReference type="RefSeq" id="NP_001309041.2">
    <property type="nucleotide sequence ID" value="NM_001322112.2"/>
</dbReference>
<dbReference type="RefSeq" id="NP_001309042.2">
    <property type="nucleotide sequence ID" value="NM_001322113.2"/>
</dbReference>
<dbReference type="RefSeq" id="NP_001309043.2">
    <property type="nucleotide sequence ID" value="NM_001322114.2"/>
</dbReference>
<dbReference type="RefSeq" id="NP_003351.2">
    <property type="nucleotide sequence ID" value="NM_003360.4"/>
</dbReference>
<dbReference type="RefSeq" id="XP_024309978.1">
    <property type="nucleotide sequence ID" value="XM_024454210.2"/>
</dbReference>
<dbReference type="RefSeq" id="XP_047272089.1">
    <property type="nucleotide sequence ID" value="XM_047416133.1"/>
</dbReference>
<dbReference type="RefSeq" id="XP_047272090.1">
    <property type="nucleotide sequence ID" value="XM_047416134.1"/>
</dbReference>
<dbReference type="RefSeq" id="XP_047272091.1">
    <property type="nucleotide sequence ID" value="XM_047416135.1"/>
</dbReference>
<dbReference type="SMR" id="Q16880"/>
<dbReference type="BioGRID" id="113215">
    <property type="interactions" value="122"/>
</dbReference>
<dbReference type="FunCoup" id="Q16880">
    <property type="interactions" value="1318"/>
</dbReference>
<dbReference type="IntAct" id="Q16880">
    <property type="interactions" value="64"/>
</dbReference>
<dbReference type="MINT" id="Q16880"/>
<dbReference type="STRING" id="9606.ENSP00000311648"/>
<dbReference type="BindingDB" id="Q16880"/>
<dbReference type="ChEMBL" id="CHEMBL4739855"/>
<dbReference type="SwissLipids" id="SLP:000001432"/>
<dbReference type="CAZy" id="GT1">
    <property type="family name" value="Glycosyltransferase Family 1"/>
</dbReference>
<dbReference type="GlyConnect" id="980">
    <property type="glycosylation" value="10 N-Linked glycans (3 sites)"/>
</dbReference>
<dbReference type="GlyCosmos" id="Q16880">
    <property type="glycosylation" value="3 sites, 10 glycans"/>
</dbReference>
<dbReference type="GlyGen" id="Q16880">
    <property type="glycosylation" value="5 sites, 20 N-linked glycans (3 sites), 1 O-linked glycan (2 sites)"/>
</dbReference>
<dbReference type="iPTMnet" id="Q16880"/>
<dbReference type="PhosphoSitePlus" id="Q16880"/>
<dbReference type="BioMuta" id="UGT8"/>
<dbReference type="DMDM" id="296434442"/>
<dbReference type="jPOST" id="Q16880"/>
<dbReference type="MassIVE" id="Q16880"/>
<dbReference type="PaxDb" id="9606-ENSP00000311648"/>
<dbReference type="PeptideAtlas" id="Q16880"/>
<dbReference type="ProteomicsDB" id="61118"/>
<dbReference type="Pumba" id="Q16880"/>
<dbReference type="Antibodypedia" id="2809">
    <property type="antibodies" value="217 antibodies from 30 providers"/>
</dbReference>
<dbReference type="DNASU" id="7368"/>
<dbReference type="Ensembl" id="ENST00000310836.11">
    <property type="protein sequence ID" value="ENSP00000311648.6"/>
    <property type="gene ID" value="ENSG00000174607.12"/>
</dbReference>
<dbReference type="Ensembl" id="ENST00000394511.3">
    <property type="protein sequence ID" value="ENSP00000378019.3"/>
    <property type="gene ID" value="ENSG00000174607.12"/>
</dbReference>
<dbReference type="Ensembl" id="ENST00000507710.2">
    <property type="protein sequence ID" value="ENSP00000421446.2"/>
    <property type="gene ID" value="ENSG00000174607.12"/>
</dbReference>
<dbReference type="GeneID" id="7368"/>
<dbReference type="KEGG" id="hsa:7368"/>
<dbReference type="MANE-Select" id="ENST00000310836.11">
    <property type="protein sequence ID" value="ENSP00000311648.6"/>
    <property type="RefSeq nucleotide sequence ID" value="NM_001128174.3"/>
    <property type="RefSeq protein sequence ID" value="NP_001121646.2"/>
</dbReference>
<dbReference type="UCSC" id="uc003ibs.3">
    <property type="organism name" value="human"/>
</dbReference>
<dbReference type="AGR" id="HGNC:12555"/>
<dbReference type="CTD" id="7368"/>
<dbReference type="DisGeNET" id="7368"/>
<dbReference type="GeneCards" id="UGT8"/>
<dbReference type="HGNC" id="HGNC:12555">
    <property type="gene designation" value="UGT8"/>
</dbReference>
<dbReference type="HPA" id="ENSG00000174607">
    <property type="expression patterns" value="Tissue enriched (brain)"/>
</dbReference>
<dbReference type="MIM" id="601291">
    <property type="type" value="gene"/>
</dbReference>
<dbReference type="neXtProt" id="NX_Q16880"/>
<dbReference type="OpenTargets" id="ENSG00000174607"/>
<dbReference type="PharmGKB" id="PA37195"/>
<dbReference type="VEuPathDB" id="HostDB:ENSG00000174607"/>
<dbReference type="eggNOG" id="KOG1192">
    <property type="taxonomic scope" value="Eukaryota"/>
</dbReference>
<dbReference type="GeneTree" id="ENSGT00940000156545"/>
<dbReference type="HOGENOM" id="CLU_012949_3_1_1"/>
<dbReference type="InParanoid" id="Q16880"/>
<dbReference type="OMA" id="WKYEGSA"/>
<dbReference type="OrthoDB" id="5835829at2759"/>
<dbReference type="PAN-GO" id="Q16880">
    <property type="GO annotations" value="3 GO annotations based on evolutionary models"/>
</dbReference>
<dbReference type="PhylomeDB" id="Q16880"/>
<dbReference type="TreeFam" id="TF315472"/>
<dbReference type="BioCyc" id="MetaCyc:HS10812-MONOMER"/>
<dbReference type="BRENDA" id="2.4.1.47">
    <property type="organism ID" value="2681"/>
</dbReference>
<dbReference type="PathwayCommons" id="Q16880"/>
<dbReference type="Reactome" id="R-HSA-9840309">
    <property type="pathway name" value="Glycosphingolipid biosynthesis"/>
</dbReference>
<dbReference type="SignaLink" id="Q16880"/>
<dbReference type="SIGNOR" id="Q16880"/>
<dbReference type="UniPathway" id="UPA00787"/>
<dbReference type="BioGRID-ORCS" id="7368">
    <property type="hits" value="12 hits in 1157 CRISPR screens"/>
</dbReference>
<dbReference type="ChiTaRS" id="UGT8">
    <property type="organism name" value="human"/>
</dbReference>
<dbReference type="GeneWiki" id="UGT8"/>
<dbReference type="GenomeRNAi" id="7368"/>
<dbReference type="Pharos" id="Q16880">
    <property type="development level" value="Tchem"/>
</dbReference>
<dbReference type="PRO" id="PR:Q16880"/>
<dbReference type="Proteomes" id="UP000005640">
    <property type="component" value="Chromosome 4"/>
</dbReference>
<dbReference type="RNAct" id="Q16880">
    <property type="molecule type" value="protein"/>
</dbReference>
<dbReference type="Bgee" id="ENSG00000174607">
    <property type="expression patterns" value="Expressed in inferior vagus X ganglion and 165 other cell types or tissues"/>
</dbReference>
<dbReference type="ExpressionAtlas" id="Q16880">
    <property type="expression patterns" value="baseline and differential"/>
</dbReference>
<dbReference type="GO" id="GO:0005783">
    <property type="term" value="C:endoplasmic reticulum"/>
    <property type="evidence" value="ECO:0000250"/>
    <property type="project" value="UniProtKB"/>
</dbReference>
<dbReference type="GO" id="GO:0005789">
    <property type="term" value="C:endoplasmic reticulum membrane"/>
    <property type="evidence" value="ECO:0000304"/>
    <property type="project" value="Reactome"/>
</dbReference>
<dbReference type="GO" id="GO:0003851">
    <property type="term" value="F:N-acylsphingosine galactosyltransferase activity"/>
    <property type="evidence" value="ECO:0000250"/>
    <property type="project" value="UniProtKB"/>
</dbReference>
<dbReference type="GO" id="GO:0008489">
    <property type="term" value="F:UDP-galactose:glucosylceramide beta-1,4-galactosyltransferase activity"/>
    <property type="evidence" value="ECO:0000304"/>
    <property type="project" value="ProtInc"/>
</dbReference>
<dbReference type="GO" id="GO:0007417">
    <property type="term" value="P:central nervous system development"/>
    <property type="evidence" value="ECO:0000304"/>
    <property type="project" value="ProtInc"/>
</dbReference>
<dbReference type="GO" id="GO:0007010">
    <property type="term" value="P:cytoskeleton organization"/>
    <property type="evidence" value="ECO:0007669"/>
    <property type="project" value="Ensembl"/>
</dbReference>
<dbReference type="GO" id="GO:0006682">
    <property type="term" value="P:galactosylceramide biosynthetic process"/>
    <property type="evidence" value="ECO:0000250"/>
    <property type="project" value="UniProtKB"/>
</dbReference>
<dbReference type="GO" id="GO:0006688">
    <property type="term" value="P:glycosphingolipid biosynthetic process"/>
    <property type="evidence" value="ECO:0000304"/>
    <property type="project" value="Reactome"/>
</dbReference>
<dbReference type="GO" id="GO:0048812">
    <property type="term" value="P:neuron projection morphogenesis"/>
    <property type="evidence" value="ECO:0007669"/>
    <property type="project" value="Ensembl"/>
</dbReference>
<dbReference type="GO" id="GO:0030913">
    <property type="term" value="P:paranodal junction assembly"/>
    <property type="evidence" value="ECO:0007669"/>
    <property type="project" value="Ensembl"/>
</dbReference>
<dbReference type="GO" id="GO:0007422">
    <property type="term" value="P:peripheral nervous system development"/>
    <property type="evidence" value="ECO:0000304"/>
    <property type="project" value="ProtInc"/>
</dbReference>
<dbReference type="GO" id="GO:0002175">
    <property type="term" value="P:protein localization to paranode region of axon"/>
    <property type="evidence" value="ECO:0007669"/>
    <property type="project" value="Ensembl"/>
</dbReference>
<dbReference type="GO" id="GO:0035902">
    <property type="term" value="P:response to immobilization stress"/>
    <property type="evidence" value="ECO:0007669"/>
    <property type="project" value="Ensembl"/>
</dbReference>
<dbReference type="CDD" id="cd03784">
    <property type="entry name" value="GT1_Gtf-like"/>
    <property type="match status" value="1"/>
</dbReference>
<dbReference type="FunFam" id="3.40.50.2000:FF:000033">
    <property type="entry name" value="2-hydroxyacylsphingosine 1-beta-galactosyltransferase"/>
    <property type="match status" value="1"/>
</dbReference>
<dbReference type="FunFam" id="3.40.50.2000:FF:000001">
    <property type="entry name" value="UDP-glucuronosyltransferase"/>
    <property type="match status" value="1"/>
</dbReference>
<dbReference type="Gene3D" id="3.40.50.2000">
    <property type="entry name" value="Glycogen Phosphorylase B"/>
    <property type="match status" value="2"/>
</dbReference>
<dbReference type="InterPro" id="IPR050271">
    <property type="entry name" value="UDP-glycosyltransferase"/>
</dbReference>
<dbReference type="InterPro" id="IPR002213">
    <property type="entry name" value="UDP_glucos_trans"/>
</dbReference>
<dbReference type="InterPro" id="IPR035595">
    <property type="entry name" value="UDP_glycos_trans_CS"/>
</dbReference>
<dbReference type="PANTHER" id="PTHR48043:SF54">
    <property type="entry name" value="2-HYDROXYACYLSPHINGOSINE 1-BETA-GALACTOSYLTRANSFERASE"/>
    <property type="match status" value="1"/>
</dbReference>
<dbReference type="PANTHER" id="PTHR48043">
    <property type="entry name" value="EG:EG0003.4 PROTEIN-RELATED"/>
    <property type="match status" value="1"/>
</dbReference>
<dbReference type="Pfam" id="PF00201">
    <property type="entry name" value="UDPGT"/>
    <property type="match status" value="1"/>
</dbReference>
<dbReference type="SUPFAM" id="SSF53756">
    <property type="entry name" value="UDP-Glycosyltransferase/glycogen phosphorylase"/>
    <property type="match status" value="1"/>
</dbReference>
<dbReference type="PROSITE" id="PS00375">
    <property type="entry name" value="UDPGT"/>
    <property type="match status" value="1"/>
</dbReference>
<evidence type="ECO:0000250" key="1">
    <source>
        <dbReference type="UniProtKB" id="Q09426"/>
    </source>
</evidence>
<evidence type="ECO:0000255" key="2"/>
<evidence type="ECO:0000269" key="3">
    <source>
    </source>
</evidence>
<evidence type="ECO:0000269" key="4">
    <source>
    </source>
</evidence>
<evidence type="ECO:0000269" key="5">
    <source>
    </source>
</evidence>
<evidence type="ECO:0000269" key="6">
    <source>
    </source>
</evidence>
<evidence type="ECO:0000269" key="7">
    <source ref="5"/>
</evidence>
<evidence type="ECO:0000305" key="8"/>
<evidence type="ECO:0000312" key="9">
    <source>
        <dbReference type="HGNC" id="HGNC:12555"/>
    </source>
</evidence>
<comment type="function">
    <text evidence="1 6">Catalyzes the transfer of galactose to ceramide, a key enzymatic step in the biosynthesis of galactocerebrosides, which are abundant sphingolipids of the myelin membrane of the central nervous system and peripheral nervous system (PubMed:9125199). Galactosylates both hydroxy- and non-hydroxy fatty acid-containing ceramides and diglycerides (By similarity).</text>
</comment>
<comment type="catalytic activity">
    <reaction evidence="1">
        <text>an N-acylsphing-4-enine + UDP-alpha-D-galactose = a beta-D-galactosyl-(1&lt;-&gt;1')-N-acylsphing-4-enine + UDP + H(+)</text>
        <dbReference type="Rhea" id="RHEA:13093"/>
        <dbReference type="ChEBI" id="CHEBI:15378"/>
        <dbReference type="ChEBI" id="CHEBI:18390"/>
        <dbReference type="ChEBI" id="CHEBI:52639"/>
        <dbReference type="ChEBI" id="CHEBI:58223"/>
        <dbReference type="ChEBI" id="CHEBI:66914"/>
        <dbReference type="EC" id="2.4.1.47"/>
    </reaction>
    <physiologicalReaction direction="left-to-right" evidence="1">
        <dbReference type="Rhea" id="RHEA:13094"/>
    </physiologicalReaction>
</comment>
<comment type="catalytic activity">
    <reaction evidence="6">
        <text>an N-acyl-sphingoid base + UDP-alpha-D-galactose = a D-galactosylceramide + UDP + H(+)</text>
        <dbReference type="Rhea" id="RHEA:48344"/>
        <dbReference type="ChEBI" id="CHEBI:15378"/>
        <dbReference type="ChEBI" id="CHEBI:36498"/>
        <dbReference type="ChEBI" id="CHEBI:58223"/>
        <dbReference type="ChEBI" id="CHEBI:66914"/>
        <dbReference type="ChEBI" id="CHEBI:83273"/>
    </reaction>
</comment>
<comment type="catalytic activity">
    <reaction evidence="1">
        <text>N-(2-hydroxy-hexanoyl)-sphing-4-enine + UDP-alpha-D-galactose = N-(2-hydroxy-hexanoyl)-beta-D-galactosyl-sphing-4-enine + UDP + H(+)</text>
        <dbReference type="Rhea" id="RHEA:43400"/>
        <dbReference type="ChEBI" id="CHEBI:15378"/>
        <dbReference type="ChEBI" id="CHEBI:58223"/>
        <dbReference type="ChEBI" id="CHEBI:66914"/>
        <dbReference type="ChEBI" id="CHEBI:83244"/>
        <dbReference type="ChEBI" id="CHEBI:83246"/>
    </reaction>
    <physiologicalReaction direction="left-to-right" evidence="1">
        <dbReference type="Rhea" id="RHEA:43401"/>
    </physiologicalReaction>
</comment>
<comment type="catalytic activity">
    <reaction evidence="1">
        <text>N-(2-hydroxy-hexanoyl)-sphinganine + UDP-alpha-D-galactose = N-(2-hydroxyhexanoyl)-beta-D-galactosylsphinganine + UDP + H(+)</text>
        <dbReference type="Rhea" id="RHEA:43404"/>
        <dbReference type="ChEBI" id="CHEBI:15378"/>
        <dbReference type="ChEBI" id="CHEBI:58223"/>
        <dbReference type="ChEBI" id="CHEBI:66914"/>
        <dbReference type="ChEBI" id="CHEBI:83248"/>
        <dbReference type="ChEBI" id="CHEBI:83257"/>
    </reaction>
    <physiologicalReaction direction="left-to-right" evidence="1">
        <dbReference type="Rhea" id="RHEA:43405"/>
    </physiologicalReaction>
</comment>
<comment type="pathway">
    <text evidence="6">Sphingolipid metabolism; galactosylceramide biosynthesis.</text>
</comment>
<comment type="subcellular location">
    <subcellularLocation>
        <location evidence="8">Membrane</location>
        <topology evidence="8">Single-pass membrane protein</topology>
    </subcellularLocation>
    <subcellularLocation>
        <location evidence="1">Endoplasmic reticulum</location>
    </subcellularLocation>
</comment>
<comment type="similarity">
    <text evidence="8">Belongs to the UDP-glycosyltransferase family.</text>
</comment>
<comment type="online information" name="Functional Glycomics Gateway - GTase">
    <link uri="http://www.functionalglycomics.org/glycomics/molecule/jsp/glycoEnzyme/viewGlycoEnzyme.jsp?gbpId=gt_hum_449"/>
    <text>2-hydroxyacylsphingosine 1-beta-galactosyltransferase precursor</text>
</comment>